<keyword id="KW-0007">Acetylation</keyword>
<keyword id="KW-0507">mRNA processing</keyword>
<keyword id="KW-0508">mRNA splicing</keyword>
<keyword id="KW-0539">Nucleus</keyword>
<keyword id="KW-0597">Phosphoprotein</keyword>
<keyword id="KW-1185">Reference proteome</keyword>
<keyword id="KW-0687">Ribonucleoprotein</keyword>
<keyword id="KW-0694">RNA-binding</keyword>
<keyword id="KW-0747">Spliceosome</keyword>
<reference key="1">
    <citation type="submission" date="2005-08" db="EMBL/GenBank/DDBJ databases">
        <authorList>
            <consortium name="NIH - Mammalian Gene Collection (MGC) project"/>
        </authorList>
    </citation>
    <scope>NUCLEOTIDE SEQUENCE [LARGE SCALE MRNA]</scope>
    <source>
        <strain>Hereford</strain>
        <tissue>Ascending colon</tissue>
    </source>
</reference>
<name>NH2L1_BOVIN</name>
<accession>Q3B8S0</accession>
<comment type="function">
    <text evidence="1">Part of the small subunit (SSU) processome, first precursor of the small eukaryotic ribosomal subunit. During the assembly of the SSU processome in the nucleolus, many ribosome biogenesis factors, an RNA chaperone and ribosomal proteins associate with the nascent pre-rRNA and work in concert to generate RNA folding, modifications, rearrangements and cleavage as well as targeted degradation of pre-ribosomal RNA by the RNA exosome. Involved in pre-mRNA splicing as component of the spliceosome. Binds to the 5'-stem-loop of U4 snRNA and thereby contributes to spliceosome assembly. The protein undergoes a conformational change upon RNA-binding. Core component of box C/D small nucleolar ribonucleoprotein (snoRNP) complexes that function in methylation of multiple sites on ribosomal RNAs (rRNAs) and messenger RNAs (mRNAs) (By similarity).</text>
</comment>
<comment type="subunit">
    <text evidence="1">Identified in the spliceosome B complex. Component of the U4/U6-U5 tri-snRNP complex composed of the U4, U6 and U5 snRNAs and at least PRPF3, PRPF4, PRPF6, PRPF8, PRPF31, SNRNP200, TXNL4A, WDR57, SNRNP40, DDX23, CD2BP2, PPIH, NHP2L1, EFTUD2, SART1 and USP39. Interacts with RAD17 and PRPF31. The complex formed by SNU13 and PRPF31 binds U4 snRNA. The complex formed by SNU13 and PRPF31 also binds U4atac snRNA, a characteristic component of specific, less abundant spliceosomal complexes. Part of the small subunit (SSU) processome, composed of more than 70 proteins and the RNA chaperone small nucleolar RNA (snoRNA) U3. Core component of box C/D small nucleolar ribonucleoprotein (snoRNP) particles; the core proteins SNU13, NOP56, NOP58 and FBL or FBLL1 assemble stepwise onto the snoRNA (By similarity).</text>
</comment>
<comment type="subcellular location">
    <subcellularLocation>
        <location evidence="1">Nucleus</location>
    </subcellularLocation>
    <subcellularLocation>
        <location evidence="1">Nucleus</location>
        <location evidence="1">Nucleolus</location>
    </subcellularLocation>
    <text evidence="1">Concentrated in the dense fibrillar component of the nucleolus.</text>
</comment>
<comment type="similarity">
    <text evidence="3">Belongs to the eukaryotic ribosomal protein eL8 family.</text>
</comment>
<organism>
    <name type="scientific">Bos taurus</name>
    <name type="common">Bovine</name>
    <dbReference type="NCBI Taxonomy" id="9913"/>
    <lineage>
        <taxon>Eukaryota</taxon>
        <taxon>Metazoa</taxon>
        <taxon>Chordata</taxon>
        <taxon>Craniata</taxon>
        <taxon>Vertebrata</taxon>
        <taxon>Euteleostomi</taxon>
        <taxon>Mammalia</taxon>
        <taxon>Eutheria</taxon>
        <taxon>Laurasiatheria</taxon>
        <taxon>Artiodactyla</taxon>
        <taxon>Ruminantia</taxon>
        <taxon>Pecora</taxon>
        <taxon>Bovidae</taxon>
        <taxon>Bovinae</taxon>
        <taxon>Bos</taxon>
    </lineage>
</organism>
<feature type="chain" id="PRO_0000423259" description="NHP2-like protein 1">
    <location>
        <begin position="1"/>
        <end position="128"/>
    </location>
</feature>
<feature type="initiator methionine" description="Removed; alternate" evidence="1">
    <location>
        <position position="1"/>
    </location>
</feature>
<feature type="chain" id="PRO_0000254029" description="NHP2-like protein 1, N-terminally processed">
    <location>
        <begin position="2"/>
        <end position="128"/>
    </location>
</feature>
<feature type="region of interest" description="Interaction with U4 snRNA and U4atac snRNA" evidence="1">
    <location>
        <begin position="36"/>
        <end position="48"/>
    </location>
</feature>
<feature type="region of interest" description="Important for U4 snRNA-binding" evidence="1">
    <location>
        <begin position="96"/>
        <end position="128"/>
    </location>
</feature>
<feature type="site" description="Interaction with U4 snRNA and U4atac snRNA" evidence="1">
    <location>
        <position position="61"/>
    </location>
</feature>
<feature type="site" description="Interaction with U4 snRNA and U4atac snRNA" evidence="1">
    <location>
        <position position="86"/>
    </location>
</feature>
<feature type="modified residue" description="N-acetylmethionine" evidence="1">
    <location>
        <position position="1"/>
    </location>
</feature>
<feature type="modified residue" description="N-acetylthreonine; in NHP2-like protein 1, N-terminally processed" evidence="1">
    <location>
        <position position="2"/>
    </location>
</feature>
<feature type="modified residue" description="N6-acetyllysine" evidence="2">
    <location>
        <position position="21"/>
    </location>
</feature>
<feature type="modified residue" description="Phosphoserine" evidence="1">
    <location>
        <position position="122"/>
    </location>
</feature>
<sequence>MTEADVNPKAYPLADAHLTKKLLDLVQQSCNYKQLRKGANEATKTLNRGISEFIVMAADAEPLEIILHLPLLCEDKNVPYVFVRSKQALGRACGVSRPVIACSVTIKEGSQLKQQIQSIQQSIERLLV</sequence>
<protein>
    <recommendedName>
        <fullName>NHP2-like protein 1</fullName>
    </recommendedName>
    <alternativeName>
        <fullName>High mobility group-like nuclear protein 2 homolog 1</fullName>
    </alternativeName>
    <alternativeName>
        <fullName evidence="1">U4/U6.U5 small nuclear ribonucleoprotein SNU13</fullName>
    </alternativeName>
    <alternativeName>
        <fullName>U4/U6.U5 tri-snRNP 15.5 kDa protein</fullName>
    </alternativeName>
    <component>
        <recommendedName>
            <fullName>NHP2-like protein 1, N-terminally processed</fullName>
        </recommendedName>
    </component>
</protein>
<evidence type="ECO:0000250" key="1">
    <source>
        <dbReference type="UniProtKB" id="P55769"/>
    </source>
</evidence>
<evidence type="ECO:0000250" key="2">
    <source>
        <dbReference type="UniProtKB" id="Q9D0T1"/>
    </source>
</evidence>
<evidence type="ECO:0000305" key="3"/>
<gene>
    <name evidence="1" type="primary">SNU13</name>
    <name type="synonym">NHP2L1</name>
</gene>
<dbReference type="EMBL" id="BC103317">
    <property type="protein sequence ID" value="AAI03318.1"/>
    <property type="molecule type" value="mRNA"/>
</dbReference>
<dbReference type="RefSeq" id="NP_001070472.1">
    <property type="nucleotide sequence ID" value="NM_001077004.1"/>
</dbReference>
<dbReference type="BMRB" id="Q3B8S0"/>
<dbReference type="SMR" id="Q3B8S0"/>
<dbReference type="FunCoup" id="Q3B8S0">
    <property type="interactions" value="3734"/>
</dbReference>
<dbReference type="STRING" id="9913.ENSBTAP00000008022"/>
<dbReference type="PaxDb" id="9913-ENSBTAP00000008022"/>
<dbReference type="PeptideAtlas" id="Q3B8S0"/>
<dbReference type="Ensembl" id="ENSBTAT00000008022.5">
    <property type="protein sequence ID" value="ENSBTAP00000008022.3"/>
    <property type="gene ID" value="ENSBTAG00000006104.5"/>
</dbReference>
<dbReference type="Ensembl" id="ENSBTAT00000108303.1">
    <property type="protein sequence ID" value="ENSBTAP00000091100.1"/>
    <property type="gene ID" value="ENSBTAG00000006104.5"/>
</dbReference>
<dbReference type="GeneID" id="767931"/>
<dbReference type="KEGG" id="bta:767931"/>
<dbReference type="CTD" id="4809"/>
<dbReference type="VEuPathDB" id="HostDB:ENSBTAG00000006104"/>
<dbReference type="VGNC" id="VGNC:35087">
    <property type="gene designation" value="SNU13"/>
</dbReference>
<dbReference type="eggNOG" id="KOG3387">
    <property type="taxonomic scope" value="Eukaryota"/>
</dbReference>
<dbReference type="GeneTree" id="ENSGT00550000074840"/>
<dbReference type="HOGENOM" id="CLU_084513_4_1_1"/>
<dbReference type="InParanoid" id="Q3B8S0"/>
<dbReference type="OMA" id="IKNQIYA"/>
<dbReference type="OrthoDB" id="1924699at2759"/>
<dbReference type="TreeFam" id="TF300184"/>
<dbReference type="Reactome" id="R-BTA-6791226">
    <property type="pathway name" value="Major pathway of rRNA processing in the nucleolus and cytosol"/>
</dbReference>
<dbReference type="Reactome" id="R-BTA-72163">
    <property type="pathway name" value="mRNA Splicing - Major Pathway"/>
</dbReference>
<dbReference type="Proteomes" id="UP000009136">
    <property type="component" value="Chromosome 5"/>
</dbReference>
<dbReference type="Bgee" id="ENSBTAG00000006104">
    <property type="expression patterns" value="Expressed in vas deferens and 106 other cell types or tissues"/>
</dbReference>
<dbReference type="GO" id="GO:0031428">
    <property type="term" value="C:box C/D methylation guide snoRNP complex"/>
    <property type="evidence" value="ECO:0000318"/>
    <property type="project" value="GO_Central"/>
</dbReference>
<dbReference type="GO" id="GO:0005730">
    <property type="term" value="C:nucleolus"/>
    <property type="evidence" value="ECO:0000318"/>
    <property type="project" value="GO_Central"/>
</dbReference>
<dbReference type="GO" id="GO:0005634">
    <property type="term" value="C:nucleus"/>
    <property type="evidence" value="ECO:0000250"/>
    <property type="project" value="UniProtKB"/>
</dbReference>
<dbReference type="GO" id="GO:0071011">
    <property type="term" value="C:precatalytic spliceosome"/>
    <property type="evidence" value="ECO:0000318"/>
    <property type="project" value="GO_Central"/>
</dbReference>
<dbReference type="GO" id="GO:0032040">
    <property type="term" value="C:small-subunit processome"/>
    <property type="evidence" value="ECO:0000250"/>
    <property type="project" value="UniProtKB"/>
</dbReference>
<dbReference type="GO" id="GO:0071005">
    <property type="term" value="C:U2-type precatalytic spliceosome"/>
    <property type="evidence" value="ECO:0000250"/>
    <property type="project" value="UniProtKB"/>
</dbReference>
<dbReference type="GO" id="GO:0046540">
    <property type="term" value="C:U4/U6 x U5 tri-snRNP complex"/>
    <property type="evidence" value="ECO:0000250"/>
    <property type="project" value="UniProtKB"/>
</dbReference>
<dbReference type="GO" id="GO:0005690">
    <property type="term" value="C:U4atac snRNP"/>
    <property type="evidence" value="ECO:0000250"/>
    <property type="project" value="UniProtKB"/>
</dbReference>
<dbReference type="GO" id="GO:0003723">
    <property type="term" value="F:RNA binding"/>
    <property type="evidence" value="ECO:0000318"/>
    <property type="project" value="GO_Central"/>
</dbReference>
<dbReference type="GO" id="GO:0030622">
    <property type="term" value="F:U4atac snRNA binding"/>
    <property type="evidence" value="ECO:0000250"/>
    <property type="project" value="UniProtKB"/>
</dbReference>
<dbReference type="GO" id="GO:0030490">
    <property type="term" value="P:maturation of SSU-rRNA"/>
    <property type="evidence" value="ECO:0000318"/>
    <property type="project" value="GO_Central"/>
</dbReference>
<dbReference type="GO" id="GO:0000398">
    <property type="term" value="P:mRNA splicing, via spliceosome"/>
    <property type="evidence" value="ECO:0000250"/>
    <property type="project" value="UniProtKB"/>
</dbReference>
<dbReference type="GO" id="GO:0042274">
    <property type="term" value="P:ribosomal small subunit biogenesis"/>
    <property type="evidence" value="ECO:0000250"/>
    <property type="project" value="UniProtKB"/>
</dbReference>
<dbReference type="CDD" id="cd21104">
    <property type="entry name" value="SNU13"/>
    <property type="match status" value="1"/>
</dbReference>
<dbReference type="FunFam" id="3.30.1330.30:FF:000002">
    <property type="entry name" value="NHP2-like protein 1 homolog"/>
    <property type="match status" value="1"/>
</dbReference>
<dbReference type="Gene3D" id="3.30.1330.30">
    <property type="match status" value="1"/>
</dbReference>
<dbReference type="InterPro" id="IPR050257">
    <property type="entry name" value="eL8/uL1-like"/>
</dbReference>
<dbReference type="InterPro" id="IPR002415">
    <property type="entry name" value="H/ACA_rnp_Nhp2-like"/>
</dbReference>
<dbReference type="InterPro" id="IPR029064">
    <property type="entry name" value="Ribosomal_eL30-like_sf"/>
</dbReference>
<dbReference type="InterPro" id="IPR004037">
    <property type="entry name" value="Ribosomal_eL8-like_CS"/>
</dbReference>
<dbReference type="InterPro" id="IPR004038">
    <property type="entry name" value="Ribosomal_eL8/eL30/eS12/Gad45"/>
</dbReference>
<dbReference type="InterPro" id="IPR018492">
    <property type="entry name" value="Ribosomal_eL8/Nhp2"/>
</dbReference>
<dbReference type="PANTHER" id="PTHR23105">
    <property type="entry name" value="RIBOSOMAL PROTEIN L7AE FAMILY MEMBER"/>
    <property type="match status" value="1"/>
</dbReference>
<dbReference type="Pfam" id="PF01248">
    <property type="entry name" value="Ribosomal_L7Ae"/>
    <property type="match status" value="1"/>
</dbReference>
<dbReference type="PRINTS" id="PR00881">
    <property type="entry name" value="L7ARS6FAMILY"/>
</dbReference>
<dbReference type="PRINTS" id="PR00883">
    <property type="entry name" value="NUCLEARHMG"/>
</dbReference>
<dbReference type="SUPFAM" id="SSF55315">
    <property type="entry name" value="L30e-like"/>
    <property type="match status" value="1"/>
</dbReference>
<dbReference type="PROSITE" id="PS01082">
    <property type="entry name" value="RIBOSOMAL_L7AE"/>
    <property type="match status" value="1"/>
</dbReference>
<proteinExistence type="evidence at transcript level"/>